<comment type="similarity">
    <text evidence="1">Belongs to the bacterial ribosomal protein bL34 family.</text>
</comment>
<name>RL34_EXIS2</name>
<feature type="chain" id="PRO_1000196051" description="Large ribosomal subunit protein bL34">
    <location>
        <begin position="1"/>
        <end position="44"/>
    </location>
</feature>
<keyword id="KW-1185">Reference proteome</keyword>
<keyword id="KW-0687">Ribonucleoprotein</keyword>
<keyword id="KW-0689">Ribosomal protein</keyword>
<reference key="1">
    <citation type="submission" date="2008-04" db="EMBL/GenBank/DDBJ databases">
        <title>Complete sequence of chromosome of Exiguobacterium sibiricum 255-15.</title>
        <authorList>
            <consortium name="US DOE Joint Genome Institute"/>
            <person name="Copeland A."/>
            <person name="Lucas S."/>
            <person name="Lapidus A."/>
            <person name="Glavina del Rio T."/>
            <person name="Dalin E."/>
            <person name="Tice H."/>
            <person name="Bruce D."/>
            <person name="Goodwin L."/>
            <person name="Pitluck S."/>
            <person name="Kiss H."/>
            <person name="Chertkov O."/>
            <person name="Monk C."/>
            <person name="Brettin T."/>
            <person name="Detter J.C."/>
            <person name="Han C."/>
            <person name="Kuske C.R."/>
            <person name="Schmutz J."/>
            <person name="Larimer F."/>
            <person name="Land M."/>
            <person name="Hauser L."/>
            <person name="Kyrpides N."/>
            <person name="Mikhailova N."/>
            <person name="Vishnivetskaya T."/>
            <person name="Rodrigues D.F."/>
            <person name="Gilichinsky D."/>
            <person name="Tiedje J."/>
            <person name="Richardson P."/>
        </authorList>
    </citation>
    <scope>NUCLEOTIDE SEQUENCE [LARGE SCALE GENOMIC DNA]</scope>
    <source>
        <strain>DSM 17290 / CCUG 55495 / CIP 109462 / JCM 13490 / 255-15</strain>
    </source>
</reference>
<proteinExistence type="inferred from homology"/>
<accession>B1YGB1</accession>
<protein>
    <recommendedName>
        <fullName evidence="1">Large ribosomal subunit protein bL34</fullName>
    </recommendedName>
    <alternativeName>
        <fullName evidence="2">50S ribosomal protein L34</fullName>
    </alternativeName>
</protein>
<evidence type="ECO:0000255" key="1">
    <source>
        <dbReference type="HAMAP-Rule" id="MF_00391"/>
    </source>
</evidence>
<evidence type="ECO:0000305" key="2"/>
<organism>
    <name type="scientific">Exiguobacterium sibiricum (strain DSM 17290 / CCUG 55495 / CIP 109462 / JCM 13490 / 255-15)</name>
    <dbReference type="NCBI Taxonomy" id="262543"/>
    <lineage>
        <taxon>Bacteria</taxon>
        <taxon>Bacillati</taxon>
        <taxon>Bacillota</taxon>
        <taxon>Bacilli</taxon>
        <taxon>Bacillales</taxon>
        <taxon>Bacillales Family XII. Incertae Sedis</taxon>
        <taxon>Exiguobacterium</taxon>
    </lineage>
</organism>
<dbReference type="EMBL" id="CP001022">
    <property type="protein sequence ID" value="ACB62495.1"/>
    <property type="molecule type" value="Genomic_DNA"/>
</dbReference>
<dbReference type="RefSeq" id="WP_012371910.1">
    <property type="nucleotide sequence ID" value="NC_010556.1"/>
</dbReference>
<dbReference type="SMR" id="B1YGB1"/>
<dbReference type="STRING" id="262543.Exig_3050"/>
<dbReference type="GeneID" id="90839020"/>
<dbReference type="KEGG" id="esi:Exig_3050"/>
<dbReference type="eggNOG" id="COG0230">
    <property type="taxonomic scope" value="Bacteria"/>
</dbReference>
<dbReference type="HOGENOM" id="CLU_129938_2_0_9"/>
<dbReference type="OrthoDB" id="9804164at2"/>
<dbReference type="Proteomes" id="UP000001681">
    <property type="component" value="Chromosome"/>
</dbReference>
<dbReference type="GO" id="GO:1990904">
    <property type="term" value="C:ribonucleoprotein complex"/>
    <property type="evidence" value="ECO:0007669"/>
    <property type="project" value="UniProtKB-KW"/>
</dbReference>
<dbReference type="GO" id="GO:0005840">
    <property type="term" value="C:ribosome"/>
    <property type="evidence" value="ECO:0007669"/>
    <property type="project" value="UniProtKB-KW"/>
</dbReference>
<dbReference type="GO" id="GO:0003735">
    <property type="term" value="F:structural constituent of ribosome"/>
    <property type="evidence" value="ECO:0007669"/>
    <property type="project" value="InterPro"/>
</dbReference>
<dbReference type="GO" id="GO:0006412">
    <property type="term" value="P:translation"/>
    <property type="evidence" value="ECO:0007669"/>
    <property type="project" value="UniProtKB-UniRule"/>
</dbReference>
<dbReference type="FunFam" id="1.10.287.3980:FF:000001">
    <property type="entry name" value="Mitochondrial ribosomal protein L34"/>
    <property type="match status" value="1"/>
</dbReference>
<dbReference type="Gene3D" id="1.10.287.3980">
    <property type="match status" value="1"/>
</dbReference>
<dbReference type="HAMAP" id="MF_00391">
    <property type="entry name" value="Ribosomal_bL34"/>
    <property type="match status" value="1"/>
</dbReference>
<dbReference type="InterPro" id="IPR000271">
    <property type="entry name" value="Ribosomal_bL34"/>
</dbReference>
<dbReference type="NCBIfam" id="TIGR01030">
    <property type="entry name" value="rpmH_bact"/>
    <property type="match status" value="1"/>
</dbReference>
<dbReference type="PANTHER" id="PTHR14503:SF4">
    <property type="entry name" value="LARGE RIBOSOMAL SUBUNIT PROTEIN BL34M"/>
    <property type="match status" value="1"/>
</dbReference>
<dbReference type="PANTHER" id="PTHR14503">
    <property type="entry name" value="MITOCHONDRIAL RIBOSOMAL PROTEIN 34 FAMILY MEMBER"/>
    <property type="match status" value="1"/>
</dbReference>
<dbReference type="Pfam" id="PF00468">
    <property type="entry name" value="Ribosomal_L34"/>
    <property type="match status" value="1"/>
</dbReference>
<sequence length="44" mass="5119">MKPTFNPNNRKRKKVHGFRARMATKSGRRILAARRLKGRKALTV</sequence>
<gene>
    <name evidence="1" type="primary">rpmH</name>
    <name type="ordered locus">Exig_3050</name>
</gene>